<sequence length="90" mass="10140">MNKAIITVVGQDTVGIIARVCTYLSQHNVNVLDISQTIIDGYFNMMMIVDYANADKDFGAMVGNLEDLGDDIGVRIRCQREEIFTKMHRI</sequence>
<organism>
    <name type="scientific">Bifidobacterium longum (strain NCC 2705)</name>
    <dbReference type="NCBI Taxonomy" id="206672"/>
    <lineage>
        <taxon>Bacteria</taxon>
        <taxon>Bacillati</taxon>
        <taxon>Actinomycetota</taxon>
        <taxon>Actinomycetes</taxon>
        <taxon>Bifidobacteriales</taxon>
        <taxon>Bifidobacteriaceae</taxon>
        <taxon>Bifidobacterium</taxon>
    </lineage>
</organism>
<evidence type="ECO:0000255" key="1">
    <source>
        <dbReference type="HAMAP-Rule" id="MF_01054"/>
    </source>
</evidence>
<proteinExistence type="inferred from homology"/>
<comment type="similarity">
    <text evidence="1">Belongs to the UPF0237 family.</text>
</comment>
<feature type="chain" id="PRO_0000219893" description="UPF0237 protein BL1209.1">
    <location>
        <begin position="1"/>
        <end position="90"/>
    </location>
</feature>
<feature type="domain" description="ACT" evidence="1">
    <location>
        <begin position="5"/>
        <end position="79"/>
    </location>
</feature>
<gene>
    <name type="ordered locus">BL1209.1</name>
    <name type="ORF">BL1209A</name>
</gene>
<keyword id="KW-1185">Reference proteome</keyword>
<accession>Q8G509</accession>
<protein>
    <recommendedName>
        <fullName evidence="1">UPF0237 protein BL1209.1</fullName>
    </recommendedName>
</protein>
<name>YC0A_BIFLO</name>
<dbReference type="EMBL" id="AE014295">
    <property type="protein sequence ID" value="AAN25016.1"/>
    <property type="molecule type" value="Genomic_DNA"/>
</dbReference>
<dbReference type="RefSeq" id="NP_696380.1">
    <property type="nucleotide sequence ID" value="NC_004307.2"/>
</dbReference>
<dbReference type="RefSeq" id="WP_007053740.1">
    <property type="nucleotide sequence ID" value="NC_004307.2"/>
</dbReference>
<dbReference type="SMR" id="Q8G509"/>
<dbReference type="STRING" id="206672.BL1209a"/>
<dbReference type="EnsemblBacteria" id="AAN25016">
    <property type="protein sequence ID" value="AAN25016"/>
    <property type="gene ID" value="BL1209a"/>
</dbReference>
<dbReference type="KEGG" id="blo:BL1209a"/>
<dbReference type="PATRIC" id="fig|206672.9.peg.925"/>
<dbReference type="HOGENOM" id="CLU_155669_0_1_11"/>
<dbReference type="OrthoDB" id="9803078at2"/>
<dbReference type="PhylomeDB" id="Q8G509"/>
<dbReference type="Proteomes" id="UP000000439">
    <property type="component" value="Chromosome"/>
</dbReference>
<dbReference type="CDD" id="cd04872">
    <property type="entry name" value="ACT_1ZPV"/>
    <property type="match status" value="1"/>
</dbReference>
<dbReference type="Gene3D" id="3.30.70.260">
    <property type="match status" value="1"/>
</dbReference>
<dbReference type="HAMAP" id="MF_01054">
    <property type="entry name" value="UPF0237"/>
    <property type="match status" value="1"/>
</dbReference>
<dbReference type="InterPro" id="IPR045865">
    <property type="entry name" value="ACT-like_dom_sf"/>
</dbReference>
<dbReference type="InterPro" id="IPR002912">
    <property type="entry name" value="ACT_dom"/>
</dbReference>
<dbReference type="InterPro" id="IPR050990">
    <property type="entry name" value="UPF0237/GcvR_regulator"/>
</dbReference>
<dbReference type="InterPro" id="IPR022986">
    <property type="entry name" value="UPF0237_ACT"/>
</dbReference>
<dbReference type="NCBIfam" id="NF001220">
    <property type="entry name" value="PRK00194.1"/>
    <property type="match status" value="1"/>
</dbReference>
<dbReference type="PANTHER" id="PTHR34875">
    <property type="entry name" value="UPF0237 PROTEIN MJ1558"/>
    <property type="match status" value="1"/>
</dbReference>
<dbReference type="PANTHER" id="PTHR34875:SF6">
    <property type="entry name" value="UPF0237 PROTEIN MJ1558"/>
    <property type="match status" value="1"/>
</dbReference>
<dbReference type="Pfam" id="PF13740">
    <property type="entry name" value="ACT_6"/>
    <property type="match status" value="1"/>
</dbReference>
<dbReference type="SUPFAM" id="SSF55021">
    <property type="entry name" value="ACT-like"/>
    <property type="match status" value="1"/>
</dbReference>
<dbReference type="PROSITE" id="PS51671">
    <property type="entry name" value="ACT"/>
    <property type="match status" value="1"/>
</dbReference>
<reference key="1">
    <citation type="journal article" date="2002" name="Proc. Natl. Acad. Sci. U.S.A.">
        <title>The genome sequence of Bifidobacterium longum reflects its adaptation to the human gastrointestinal tract.</title>
        <authorList>
            <person name="Schell M.A."/>
            <person name="Karmirantzou M."/>
            <person name="Snel B."/>
            <person name="Vilanova D."/>
            <person name="Berger B."/>
            <person name="Pessi G."/>
            <person name="Zwahlen M.-C."/>
            <person name="Desiere F."/>
            <person name="Bork P."/>
            <person name="Delley M."/>
            <person name="Pridmore R.D."/>
            <person name="Arigoni F."/>
        </authorList>
    </citation>
    <scope>NUCLEOTIDE SEQUENCE [LARGE SCALE GENOMIC DNA]</scope>
    <source>
        <strain>NCC 2705</strain>
    </source>
</reference>